<gene>
    <name evidence="1" type="primary">ybeY</name>
    <name type="ordered locus">CTL0681</name>
</gene>
<proteinExistence type="inferred from homology"/>
<reference key="1">
    <citation type="journal article" date="2008" name="Genome Res.">
        <title>Chlamydia trachomatis: genome sequence analysis of lymphogranuloma venereum isolates.</title>
        <authorList>
            <person name="Thomson N.R."/>
            <person name="Holden M.T.G."/>
            <person name="Carder C."/>
            <person name="Lennard N."/>
            <person name="Lockey S.J."/>
            <person name="Marsh P."/>
            <person name="Skipp P."/>
            <person name="O'Connor C.D."/>
            <person name="Goodhead I."/>
            <person name="Norbertzcak H."/>
            <person name="Harris B."/>
            <person name="Ormond D."/>
            <person name="Rance R."/>
            <person name="Quail M.A."/>
            <person name="Parkhill J."/>
            <person name="Stephens R.S."/>
            <person name="Clarke I.N."/>
        </authorList>
    </citation>
    <scope>NUCLEOTIDE SEQUENCE [LARGE SCALE GENOMIC DNA]</scope>
    <source>
        <strain>ATCC VR-902B / DSM 19102 / 434/Bu</strain>
    </source>
</reference>
<keyword id="KW-0963">Cytoplasm</keyword>
<keyword id="KW-0255">Endonuclease</keyword>
<keyword id="KW-0378">Hydrolase</keyword>
<keyword id="KW-0479">Metal-binding</keyword>
<keyword id="KW-0540">Nuclease</keyword>
<keyword id="KW-0690">Ribosome biogenesis</keyword>
<keyword id="KW-0698">rRNA processing</keyword>
<keyword id="KW-0862">Zinc</keyword>
<accession>B0B7Z4</accession>
<organism>
    <name type="scientific">Chlamydia trachomatis serovar L2 (strain ATCC VR-902B / DSM 19102 / 434/Bu)</name>
    <dbReference type="NCBI Taxonomy" id="471472"/>
    <lineage>
        <taxon>Bacteria</taxon>
        <taxon>Pseudomonadati</taxon>
        <taxon>Chlamydiota</taxon>
        <taxon>Chlamydiia</taxon>
        <taxon>Chlamydiales</taxon>
        <taxon>Chlamydiaceae</taxon>
        <taxon>Chlamydia/Chlamydophila group</taxon>
        <taxon>Chlamydia</taxon>
    </lineage>
</organism>
<dbReference type="EC" id="3.1.-.-" evidence="1"/>
<dbReference type="EMBL" id="AM884176">
    <property type="protein sequence ID" value="CAP04120.1"/>
    <property type="molecule type" value="Genomic_DNA"/>
</dbReference>
<dbReference type="RefSeq" id="WP_009872646.1">
    <property type="nucleotide sequence ID" value="NC_010287.1"/>
</dbReference>
<dbReference type="RefSeq" id="YP_001654753.1">
    <property type="nucleotide sequence ID" value="NC_010287.1"/>
</dbReference>
<dbReference type="SMR" id="B0B7Z4"/>
<dbReference type="KEGG" id="ctb:CTL0681"/>
<dbReference type="PATRIC" id="fig|471472.4.peg.732"/>
<dbReference type="HOGENOM" id="CLU_106710_2_0_0"/>
<dbReference type="Proteomes" id="UP001154402">
    <property type="component" value="Chromosome"/>
</dbReference>
<dbReference type="GO" id="GO:0005737">
    <property type="term" value="C:cytoplasm"/>
    <property type="evidence" value="ECO:0007669"/>
    <property type="project" value="UniProtKB-SubCell"/>
</dbReference>
<dbReference type="GO" id="GO:0004222">
    <property type="term" value="F:metalloendopeptidase activity"/>
    <property type="evidence" value="ECO:0007669"/>
    <property type="project" value="InterPro"/>
</dbReference>
<dbReference type="GO" id="GO:0004521">
    <property type="term" value="F:RNA endonuclease activity"/>
    <property type="evidence" value="ECO:0007669"/>
    <property type="project" value="UniProtKB-UniRule"/>
</dbReference>
<dbReference type="GO" id="GO:0008270">
    <property type="term" value="F:zinc ion binding"/>
    <property type="evidence" value="ECO:0007669"/>
    <property type="project" value="UniProtKB-UniRule"/>
</dbReference>
<dbReference type="GO" id="GO:0006364">
    <property type="term" value="P:rRNA processing"/>
    <property type="evidence" value="ECO:0007669"/>
    <property type="project" value="UniProtKB-UniRule"/>
</dbReference>
<dbReference type="Gene3D" id="3.40.390.30">
    <property type="entry name" value="Metalloproteases ('zincins'), catalytic domain"/>
    <property type="match status" value="1"/>
</dbReference>
<dbReference type="HAMAP" id="MF_00009">
    <property type="entry name" value="Endoribonucl_YbeY"/>
    <property type="match status" value="1"/>
</dbReference>
<dbReference type="InterPro" id="IPR023091">
    <property type="entry name" value="MetalPrtase_cat_dom_sf_prd"/>
</dbReference>
<dbReference type="InterPro" id="IPR002036">
    <property type="entry name" value="YbeY"/>
</dbReference>
<dbReference type="NCBIfam" id="TIGR00043">
    <property type="entry name" value="rRNA maturation RNase YbeY"/>
    <property type="match status" value="1"/>
</dbReference>
<dbReference type="Pfam" id="PF02130">
    <property type="entry name" value="YbeY"/>
    <property type="match status" value="1"/>
</dbReference>
<dbReference type="SUPFAM" id="SSF55486">
    <property type="entry name" value="Metalloproteases ('zincins'), catalytic domain"/>
    <property type="match status" value="1"/>
</dbReference>
<sequence length="161" mass="18456">MLILDRSSPQIFISNEQQDVSIDLQSAQRLVVLFLELQKVSTDQVYVYFLDDTALAQLHDEQFSDPSLTDTITLPIDKPGIASFPHVLGEAFVSPKAAMRFLEQYTEDQLYHEISRYVVHSLLHMLGYDDQTDEDKRIMQEQEDVSLSFLAEHQALLRPAV</sequence>
<protein>
    <recommendedName>
        <fullName evidence="1">Endoribonuclease YbeY</fullName>
        <ecNumber evidence="1">3.1.-.-</ecNumber>
    </recommendedName>
</protein>
<evidence type="ECO:0000255" key="1">
    <source>
        <dbReference type="HAMAP-Rule" id="MF_00009"/>
    </source>
</evidence>
<name>YBEY_CHLT2</name>
<feature type="chain" id="PRO_1000089162" description="Endoribonuclease YbeY">
    <location>
        <begin position="1"/>
        <end position="161"/>
    </location>
</feature>
<feature type="binding site" evidence="1">
    <location>
        <position position="120"/>
    </location>
    <ligand>
        <name>Zn(2+)</name>
        <dbReference type="ChEBI" id="CHEBI:29105"/>
        <note>catalytic</note>
    </ligand>
</feature>
<feature type="binding site" evidence="1">
    <location>
        <position position="124"/>
    </location>
    <ligand>
        <name>Zn(2+)</name>
        <dbReference type="ChEBI" id="CHEBI:29105"/>
        <note>catalytic</note>
    </ligand>
</feature>
<feature type="binding site" evidence="1">
    <location>
        <position position="130"/>
    </location>
    <ligand>
        <name>Zn(2+)</name>
        <dbReference type="ChEBI" id="CHEBI:29105"/>
        <note>catalytic</note>
    </ligand>
</feature>
<comment type="function">
    <text evidence="1">Single strand-specific metallo-endoribonuclease involved in late-stage 70S ribosome quality control and in maturation of the 3' terminus of the 16S rRNA.</text>
</comment>
<comment type="cofactor">
    <cofactor evidence="1">
        <name>Zn(2+)</name>
        <dbReference type="ChEBI" id="CHEBI:29105"/>
    </cofactor>
    <text evidence="1">Binds 1 zinc ion.</text>
</comment>
<comment type="subcellular location">
    <subcellularLocation>
        <location evidence="1">Cytoplasm</location>
    </subcellularLocation>
</comment>
<comment type="similarity">
    <text evidence="1">Belongs to the endoribonuclease YbeY family.</text>
</comment>